<proteinExistence type="inferred from homology"/>
<feature type="chain" id="PRO_0000377270" description="tRNA dimethylallyltransferase">
    <location>
        <begin position="1"/>
        <end position="315"/>
    </location>
</feature>
<feature type="region of interest" description="Interaction with substrate tRNA" evidence="1">
    <location>
        <begin position="43"/>
        <end position="46"/>
    </location>
</feature>
<feature type="region of interest" description="Interaction with substrate tRNA" evidence="1">
    <location>
        <begin position="167"/>
        <end position="171"/>
    </location>
</feature>
<feature type="region of interest" description="Interaction with substrate tRNA" evidence="1">
    <location>
        <begin position="248"/>
        <end position="253"/>
    </location>
</feature>
<feature type="binding site" evidence="1">
    <location>
        <begin position="18"/>
        <end position="25"/>
    </location>
    <ligand>
        <name>ATP</name>
        <dbReference type="ChEBI" id="CHEBI:30616"/>
    </ligand>
</feature>
<feature type="binding site" evidence="1">
    <location>
        <begin position="20"/>
        <end position="25"/>
    </location>
    <ligand>
        <name>substrate</name>
    </ligand>
</feature>
<feature type="site" description="Interaction with substrate tRNA" evidence="1">
    <location>
        <position position="109"/>
    </location>
</feature>
<feature type="site" description="Interaction with substrate tRNA" evidence="1">
    <location>
        <position position="131"/>
    </location>
</feature>
<dbReference type="EC" id="2.5.1.75" evidence="1"/>
<dbReference type="EMBL" id="CP000388">
    <property type="protein sequence ID" value="ABG42477.1"/>
    <property type="molecule type" value="Genomic_DNA"/>
</dbReference>
<dbReference type="RefSeq" id="WP_011576679.1">
    <property type="nucleotide sequence ID" value="NC_008228.1"/>
</dbReference>
<dbReference type="SMR" id="Q15NR1"/>
<dbReference type="STRING" id="342610.Patl_3977"/>
<dbReference type="KEGG" id="pat:Patl_3977"/>
<dbReference type="eggNOG" id="COG0324">
    <property type="taxonomic scope" value="Bacteria"/>
</dbReference>
<dbReference type="HOGENOM" id="CLU_032616_0_0_6"/>
<dbReference type="OrthoDB" id="9776390at2"/>
<dbReference type="Proteomes" id="UP000001981">
    <property type="component" value="Chromosome"/>
</dbReference>
<dbReference type="GO" id="GO:0005524">
    <property type="term" value="F:ATP binding"/>
    <property type="evidence" value="ECO:0007669"/>
    <property type="project" value="UniProtKB-UniRule"/>
</dbReference>
<dbReference type="GO" id="GO:0052381">
    <property type="term" value="F:tRNA dimethylallyltransferase activity"/>
    <property type="evidence" value="ECO:0007669"/>
    <property type="project" value="UniProtKB-UniRule"/>
</dbReference>
<dbReference type="GO" id="GO:0006400">
    <property type="term" value="P:tRNA modification"/>
    <property type="evidence" value="ECO:0007669"/>
    <property type="project" value="TreeGrafter"/>
</dbReference>
<dbReference type="FunFam" id="1.10.20.140:FF:000001">
    <property type="entry name" value="tRNA dimethylallyltransferase"/>
    <property type="match status" value="1"/>
</dbReference>
<dbReference type="Gene3D" id="1.10.20.140">
    <property type="match status" value="1"/>
</dbReference>
<dbReference type="Gene3D" id="3.40.50.300">
    <property type="entry name" value="P-loop containing nucleotide triphosphate hydrolases"/>
    <property type="match status" value="1"/>
</dbReference>
<dbReference type="HAMAP" id="MF_00185">
    <property type="entry name" value="IPP_trans"/>
    <property type="match status" value="1"/>
</dbReference>
<dbReference type="InterPro" id="IPR039657">
    <property type="entry name" value="Dimethylallyltransferase"/>
</dbReference>
<dbReference type="InterPro" id="IPR018022">
    <property type="entry name" value="IPT"/>
</dbReference>
<dbReference type="InterPro" id="IPR027417">
    <property type="entry name" value="P-loop_NTPase"/>
</dbReference>
<dbReference type="NCBIfam" id="TIGR00174">
    <property type="entry name" value="miaA"/>
    <property type="match status" value="1"/>
</dbReference>
<dbReference type="PANTHER" id="PTHR11088">
    <property type="entry name" value="TRNA DIMETHYLALLYLTRANSFERASE"/>
    <property type="match status" value="1"/>
</dbReference>
<dbReference type="PANTHER" id="PTHR11088:SF60">
    <property type="entry name" value="TRNA DIMETHYLALLYLTRANSFERASE"/>
    <property type="match status" value="1"/>
</dbReference>
<dbReference type="Pfam" id="PF01715">
    <property type="entry name" value="IPPT"/>
    <property type="match status" value="1"/>
</dbReference>
<dbReference type="SUPFAM" id="SSF52540">
    <property type="entry name" value="P-loop containing nucleoside triphosphate hydrolases"/>
    <property type="match status" value="1"/>
</dbReference>
<comment type="function">
    <text evidence="1">Catalyzes the transfer of a dimethylallyl group onto the adenine at position 37 in tRNAs that read codons beginning with uridine, leading to the formation of N6-(dimethylallyl)adenosine (i(6)A).</text>
</comment>
<comment type="catalytic activity">
    <reaction evidence="1">
        <text>adenosine(37) in tRNA + dimethylallyl diphosphate = N(6)-dimethylallyladenosine(37) in tRNA + diphosphate</text>
        <dbReference type="Rhea" id="RHEA:26482"/>
        <dbReference type="Rhea" id="RHEA-COMP:10162"/>
        <dbReference type="Rhea" id="RHEA-COMP:10375"/>
        <dbReference type="ChEBI" id="CHEBI:33019"/>
        <dbReference type="ChEBI" id="CHEBI:57623"/>
        <dbReference type="ChEBI" id="CHEBI:74411"/>
        <dbReference type="ChEBI" id="CHEBI:74415"/>
        <dbReference type="EC" id="2.5.1.75"/>
    </reaction>
</comment>
<comment type="cofactor">
    <cofactor evidence="1">
        <name>Mg(2+)</name>
        <dbReference type="ChEBI" id="CHEBI:18420"/>
    </cofactor>
</comment>
<comment type="subunit">
    <text evidence="1">Monomer.</text>
</comment>
<comment type="similarity">
    <text evidence="1">Belongs to the IPP transferase family.</text>
</comment>
<gene>
    <name evidence="1" type="primary">miaA</name>
    <name type="ordered locus">Patl_3977</name>
</gene>
<protein>
    <recommendedName>
        <fullName evidence="1">tRNA dimethylallyltransferase</fullName>
        <ecNumber evidence="1">2.5.1.75</ecNumber>
    </recommendedName>
    <alternativeName>
        <fullName evidence="1">Dimethylallyl diphosphate:tRNA dimethylallyltransferase</fullName>
        <shortName evidence="1">DMAPP:tRNA dimethylallyltransferase</shortName>
        <shortName evidence="1">DMATase</shortName>
    </alternativeName>
    <alternativeName>
        <fullName evidence="1">Isopentenyl-diphosphate:tRNA isopentenyltransferase</fullName>
        <shortName evidence="1">IPP transferase</shortName>
        <shortName evidence="1">IPPT</shortName>
        <shortName evidence="1">IPTase</shortName>
    </alternativeName>
</protein>
<accession>Q15NR1</accession>
<reference key="1">
    <citation type="submission" date="2006-06" db="EMBL/GenBank/DDBJ databases">
        <title>Complete sequence of Pseudoalteromonas atlantica T6c.</title>
        <authorList>
            <consortium name="US DOE Joint Genome Institute"/>
            <person name="Copeland A."/>
            <person name="Lucas S."/>
            <person name="Lapidus A."/>
            <person name="Barry K."/>
            <person name="Detter J.C."/>
            <person name="Glavina del Rio T."/>
            <person name="Hammon N."/>
            <person name="Israni S."/>
            <person name="Dalin E."/>
            <person name="Tice H."/>
            <person name="Pitluck S."/>
            <person name="Saunders E."/>
            <person name="Brettin T."/>
            <person name="Bruce D."/>
            <person name="Han C."/>
            <person name="Tapia R."/>
            <person name="Gilna P."/>
            <person name="Schmutz J."/>
            <person name="Larimer F."/>
            <person name="Land M."/>
            <person name="Hauser L."/>
            <person name="Kyrpides N."/>
            <person name="Kim E."/>
            <person name="Karls A.C."/>
            <person name="Bartlett D."/>
            <person name="Higgins B.P."/>
            <person name="Richardson P."/>
        </authorList>
    </citation>
    <scope>NUCLEOTIDE SEQUENCE [LARGE SCALE GENOMIC DNA]</scope>
    <source>
        <strain>T6c / ATCC BAA-1087</strain>
    </source>
</reference>
<keyword id="KW-0067">ATP-binding</keyword>
<keyword id="KW-0460">Magnesium</keyword>
<keyword id="KW-0547">Nucleotide-binding</keyword>
<keyword id="KW-0808">Transferase</keyword>
<keyword id="KW-0819">tRNA processing</keyword>
<evidence type="ECO:0000255" key="1">
    <source>
        <dbReference type="HAMAP-Rule" id="MF_00185"/>
    </source>
</evidence>
<sequence length="315" mass="35733">MNQHTDNQQLPPAILLMGPTASGKTALAIELCQALPCEIISVDSALIYKGMDIGTAKPTAEELAQAPHRLIDILDPVQSYSVAEFRRDALAAMQDITQRGRIPLLVGGTMMYYKALTDGLSTLPQADPLVRAEIEKQAEKNGWQALHQELQGIDPVSAQRIHPNDPQRLSRALEIYRISGKSMTELSLNKQPSAPYQFSQFAIAPSDRHILHDRIAQRFDIMLNSGFEDEVIELKSRADLHLDLPSMRCVGYRQMWQYLDGENIYQEMREKGLAATRQLAKRQLTWLRSWQNLHWLDTFSKDNLTNVMKLSRIRT</sequence>
<name>MIAA_PSEA6</name>
<organism>
    <name type="scientific">Pseudoalteromonas atlantica (strain T6c / ATCC BAA-1087)</name>
    <dbReference type="NCBI Taxonomy" id="3042615"/>
    <lineage>
        <taxon>Bacteria</taxon>
        <taxon>Pseudomonadati</taxon>
        <taxon>Pseudomonadota</taxon>
        <taxon>Gammaproteobacteria</taxon>
        <taxon>Alteromonadales</taxon>
        <taxon>Alteromonadaceae</taxon>
        <taxon>Paraglaciecola</taxon>
    </lineage>
</organism>